<gene>
    <name type="primary">MSR-1</name>
</gene>
<comment type="function">
    <text>May play an important role in hormonal and growth regulatory responses.</text>
</comment>
<comment type="catalytic activity">
    <reaction>
        <text>RX + glutathione = an S-substituted glutathione + a halide anion + H(+)</text>
        <dbReference type="Rhea" id="RHEA:16437"/>
        <dbReference type="ChEBI" id="CHEBI:15378"/>
        <dbReference type="ChEBI" id="CHEBI:16042"/>
        <dbReference type="ChEBI" id="CHEBI:17792"/>
        <dbReference type="ChEBI" id="CHEBI:57925"/>
        <dbReference type="ChEBI" id="CHEBI:90779"/>
        <dbReference type="EC" id="2.5.1.18"/>
    </reaction>
</comment>
<comment type="induction">
    <text>By auxin and cytokinin.</text>
</comment>
<comment type="similarity">
    <text evidence="2">Belongs to the GST superfamily. HSP26 family.</text>
</comment>
<reference key="1">
    <citation type="journal article" date="1992" name="Plant Cell">
        <title>Cytokinins and auxins control the expression of a gene in Nicotiana plumbaginifolia cells by feedback regulation.</title>
        <authorList>
            <person name="Dominov J.A."/>
            <person name="Stenzler L."/>
            <person name="Lee S."/>
            <person name="Schwarz J.J."/>
            <person name="Leisner S."/>
            <person name="Howell S.H."/>
        </authorList>
    </citation>
    <scope>NUCLEOTIDE SEQUENCE [MRNA]</scope>
</reference>
<protein>
    <recommendedName>
        <fullName>Probable glutathione S-transferase MSR-1</fullName>
        <ecNumber>2.5.1.18</ecNumber>
    </recommendedName>
    <alternativeName>
        <fullName>Auxin-regulated protein MSR-1</fullName>
    </alternativeName>
</protein>
<proteinExistence type="evidence at transcript level"/>
<organism>
    <name type="scientific">Nicotiana plumbaginifolia</name>
    <name type="common">Leadwort-leaved tobacco</name>
    <name type="synonym">Tex-Mex tobacco</name>
    <dbReference type="NCBI Taxonomy" id="4092"/>
    <lineage>
        <taxon>Eukaryota</taxon>
        <taxon>Viridiplantae</taxon>
        <taxon>Streptophyta</taxon>
        <taxon>Embryophyta</taxon>
        <taxon>Tracheophyta</taxon>
        <taxon>Spermatophyta</taxon>
        <taxon>Magnoliopsida</taxon>
        <taxon>eudicotyledons</taxon>
        <taxon>Gunneridae</taxon>
        <taxon>Pentapetalae</taxon>
        <taxon>asterids</taxon>
        <taxon>lamiids</taxon>
        <taxon>Solanales</taxon>
        <taxon>Solanaceae</taxon>
        <taxon>Nicotianoideae</taxon>
        <taxon>Nicotianeae</taxon>
        <taxon>Nicotiana</taxon>
    </lineage>
</organism>
<sequence length="219" mass="25269">MESNNVVLLDFSGSSFGMRLRIALALKGIKYEAKEENLSDKSPLLLEMNPVHKKIPILIHNGKPICESLNILEYIDEVWHEKCPLLPSDPYQRSQARFWANYIDNKIYSTGRRVWSGKGEDQEEAKKEFIEIFKTLEGELGNKTYFGGDNLGFVDVALVPFTSWFYSYETCANFSIEAECRKLVVWQNCMENERVSKSLPHPHKIYDFVLELKHKLGLA</sequence>
<name>GSTX1_NICPL</name>
<keyword id="KW-0927">Auxin signaling pathway</keyword>
<keyword id="KW-0808">Transferase</keyword>
<evidence type="ECO:0000250" key="1"/>
<evidence type="ECO:0000305" key="2"/>
<feature type="chain" id="PRO_0000185862" description="Probable glutathione S-transferase MSR-1">
    <location>
        <begin position="1"/>
        <end position="219"/>
    </location>
</feature>
<feature type="domain" description="GST N-terminal">
    <location>
        <begin position="4"/>
        <end position="83"/>
    </location>
</feature>
<feature type="domain" description="GST C-terminal">
    <location>
        <begin position="89"/>
        <end position="208"/>
    </location>
</feature>
<feature type="binding site" evidence="1">
    <location>
        <position position="14"/>
    </location>
    <ligand>
        <name>glutathione</name>
        <dbReference type="ChEBI" id="CHEBI:57925"/>
    </ligand>
</feature>
<feature type="binding site" evidence="1">
    <location>
        <position position="41"/>
    </location>
    <ligand>
        <name>glutathione</name>
        <dbReference type="ChEBI" id="CHEBI:57925"/>
    </ligand>
</feature>
<feature type="binding site" evidence="1">
    <location>
        <position position="55"/>
    </location>
    <ligand>
        <name>glutathione</name>
        <dbReference type="ChEBI" id="CHEBI:57925"/>
    </ligand>
</feature>
<feature type="binding site" evidence="1">
    <location>
        <begin position="67"/>
        <end position="68"/>
    </location>
    <ligand>
        <name>glutathione</name>
        <dbReference type="ChEBI" id="CHEBI:57925"/>
    </ligand>
</feature>
<dbReference type="EC" id="2.5.1.18"/>
<dbReference type="EMBL" id="S44036">
    <property type="protein sequence ID" value="AAB47712.2"/>
    <property type="molecule type" value="mRNA"/>
</dbReference>
<dbReference type="PIR" id="JQ1606">
    <property type="entry name" value="JQ1606"/>
</dbReference>
<dbReference type="SMR" id="P50471"/>
<dbReference type="GO" id="GO:0005737">
    <property type="term" value="C:cytoplasm"/>
    <property type="evidence" value="ECO:0007669"/>
    <property type="project" value="TreeGrafter"/>
</dbReference>
<dbReference type="GO" id="GO:0004364">
    <property type="term" value="F:glutathione transferase activity"/>
    <property type="evidence" value="ECO:0007669"/>
    <property type="project" value="UniProtKB-EC"/>
</dbReference>
<dbReference type="GO" id="GO:0009734">
    <property type="term" value="P:auxin-activated signaling pathway"/>
    <property type="evidence" value="ECO:0007669"/>
    <property type="project" value="UniProtKB-KW"/>
</dbReference>
<dbReference type="GO" id="GO:0006749">
    <property type="term" value="P:glutathione metabolic process"/>
    <property type="evidence" value="ECO:0007669"/>
    <property type="project" value="InterPro"/>
</dbReference>
<dbReference type="CDD" id="cd03185">
    <property type="entry name" value="GST_C_Tau"/>
    <property type="match status" value="1"/>
</dbReference>
<dbReference type="CDD" id="cd03058">
    <property type="entry name" value="GST_N_Tau"/>
    <property type="match status" value="1"/>
</dbReference>
<dbReference type="FunFam" id="1.20.1050.10:FF:000018">
    <property type="entry name" value="Glutathione S-transferase U20"/>
    <property type="match status" value="1"/>
</dbReference>
<dbReference type="FunFam" id="3.40.30.10:FF:000014">
    <property type="entry name" value="Tau class glutathione S-transferase"/>
    <property type="match status" value="1"/>
</dbReference>
<dbReference type="Gene3D" id="1.20.1050.10">
    <property type="match status" value="1"/>
</dbReference>
<dbReference type="Gene3D" id="3.40.30.10">
    <property type="entry name" value="Glutaredoxin"/>
    <property type="match status" value="1"/>
</dbReference>
<dbReference type="InterPro" id="IPR010987">
    <property type="entry name" value="Glutathione-S-Trfase_C-like"/>
</dbReference>
<dbReference type="InterPro" id="IPR036282">
    <property type="entry name" value="Glutathione-S-Trfase_C_sf"/>
</dbReference>
<dbReference type="InterPro" id="IPR004045">
    <property type="entry name" value="Glutathione_S-Trfase_N"/>
</dbReference>
<dbReference type="InterPro" id="IPR004046">
    <property type="entry name" value="GST_C"/>
</dbReference>
<dbReference type="InterPro" id="IPR045074">
    <property type="entry name" value="GST_C_Tau"/>
</dbReference>
<dbReference type="InterPro" id="IPR045073">
    <property type="entry name" value="Omega/Tau-like"/>
</dbReference>
<dbReference type="InterPro" id="IPR036249">
    <property type="entry name" value="Thioredoxin-like_sf"/>
</dbReference>
<dbReference type="PANTHER" id="PTHR11260:SF756">
    <property type="entry name" value="GLUTATHIONE S-TRANSFERASE PARA-RELATED"/>
    <property type="match status" value="1"/>
</dbReference>
<dbReference type="PANTHER" id="PTHR11260">
    <property type="entry name" value="GLUTATHIONE S-TRANSFERASE, GST, SUPERFAMILY, GST DOMAIN CONTAINING"/>
    <property type="match status" value="1"/>
</dbReference>
<dbReference type="Pfam" id="PF00043">
    <property type="entry name" value="GST_C"/>
    <property type="match status" value="1"/>
</dbReference>
<dbReference type="Pfam" id="PF02798">
    <property type="entry name" value="GST_N"/>
    <property type="match status" value="1"/>
</dbReference>
<dbReference type="SFLD" id="SFLDG01152">
    <property type="entry name" value="Main.3:_Omega-_and_Tau-like"/>
    <property type="match status" value="1"/>
</dbReference>
<dbReference type="SFLD" id="SFLDG00358">
    <property type="entry name" value="Main_(cytGST)"/>
    <property type="match status" value="1"/>
</dbReference>
<dbReference type="SUPFAM" id="SSF47616">
    <property type="entry name" value="GST C-terminal domain-like"/>
    <property type="match status" value="1"/>
</dbReference>
<dbReference type="SUPFAM" id="SSF52833">
    <property type="entry name" value="Thioredoxin-like"/>
    <property type="match status" value="1"/>
</dbReference>
<dbReference type="PROSITE" id="PS50405">
    <property type="entry name" value="GST_CTER"/>
    <property type="match status" value="1"/>
</dbReference>
<dbReference type="PROSITE" id="PS50404">
    <property type="entry name" value="GST_NTER"/>
    <property type="match status" value="1"/>
</dbReference>
<accession>P50471</accession>